<sequence>MPKMKSHRGACKRFKVTASGKIKRERMNGSHNLEKKNRKRSRRLHQSTLLEGTKAKQIKQMIQG</sequence>
<dbReference type="EMBL" id="CP000108">
    <property type="protein sequence ID" value="ABB28964.1"/>
    <property type="molecule type" value="Genomic_DNA"/>
</dbReference>
<dbReference type="SMR" id="Q3APW1"/>
<dbReference type="STRING" id="340177.Cag_1713"/>
<dbReference type="KEGG" id="cch:Cag_1713"/>
<dbReference type="eggNOG" id="COG0291">
    <property type="taxonomic scope" value="Bacteria"/>
</dbReference>
<dbReference type="HOGENOM" id="CLU_169643_4_3_10"/>
<dbReference type="OrthoDB" id="47476at2"/>
<dbReference type="GO" id="GO:0022625">
    <property type="term" value="C:cytosolic large ribosomal subunit"/>
    <property type="evidence" value="ECO:0007669"/>
    <property type="project" value="TreeGrafter"/>
</dbReference>
<dbReference type="GO" id="GO:0003735">
    <property type="term" value="F:structural constituent of ribosome"/>
    <property type="evidence" value="ECO:0007669"/>
    <property type="project" value="InterPro"/>
</dbReference>
<dbReference type="GO" id="GO:0006412">
    <property type="term" value="P:translation"/>
    <property type="evidence" value="ECO:0007669"/>
    <property type="project" value="UniProtKB-UniRule"/>
</dbReference>
<dbReference type="FunFam" id="4.10.410.60:FF:000001">
    <property type="entry name" value="50S ribosomal protein L35"/>
    <property type="match status" value="1"/>
</dbReference>
<dbReference type="Gene3D" id="4.10.410.60">
    <property type="match status" value="1"/>
</dbReference>
<dbReference type="HAMAP" id="MF_00514">
    <property type="entry name" value="Ribosomal_bL35"/>
    <property type="match status" value="1"/>
</dbReference>
<dbReference type="InterPro" id="IPR001706">
    <property type="entry name" value="Ribosomal_bL35"/>
</dbReference>
<dbReference type="InterPro" id="IPR021137">
    <property type="entry name" value="Ribosomal_bL35-like"/>
</dbReference>
<dbReference type="InterPro" id="IPR018265">
    <property type="entry name" value="Ribosomal_bL35_CS"/>
</dbReference>
<dbReference type="InterPro" id="IPR037229">
    <property type="entry name" value="Ribosomal_bL35_sf"/>
</dbReference>
<dbReference type="NCBIfam" id="TIGR00001">
    <property type="entry name" value="rpmI_bact"/>
    <property type="match status" value="1"/>
</dbReference>
<dbReference type="PANTHER" id="PTHR33343">
    <property type="entry name" value="54S RIBOSOMAL PROTEIN BL35M"/>
    <property type="match status" value="1"/>
</dbReference>
<dbReference type="PANTHER" id="PTHR33343:SF1">
    <property type="entry name" value="LARGE RIBOSOMAL SUBUNIT PROTEIN BL35M"/>
    <property type="match status" value="1"/>
</dbReference>
<dbReference type="Pfam" id="PF01632">
    <property type="entry name" value="Ribosomal_L35p"/>
    <property type="match status" value="1"/>
</dbReference>
<dbReference type="PRINTS" id="PR00064">
    <property type="entry name" value="RIBOSOMALL35"/>
</dbReference>
<dbReference type="SUPFAM" id="SSF143034">
    <property type="entry name" value="L35p-like"/>
    <property type="match status" value="1"/>
</dbReference>
<dbReference type="PROSITE" id="PS00936">
    <property type="entry name" value="RIBOSOMAL_L35"/>
    <property type="match status" value="1"/>
</dbReference>
<name>RL35_CHLCH</name>
<gene>
    <name evidence="1" type="primary">rpmI</name>
    <name type="ordered locus">Cag_1713</name>
</gene>
<protein>
    <recommendedName>
        <fullName evidence="1">Large ribosomal subunit protein bL35</fullName>
    </recommendedName>
    <alternativeName>
        <fullName evidence="2">50S ribosomal protein L35</fullName>
    </alternativeName>
</protein>
<comment type="similarity">
    <text evidence="1">Belongs to the bacterial ribosomal protein bL35 family.</text>
</comment>
<reference key="1">
    <citation type="submission" date="2005-08" db="EMBL/GenBank/DDBJ databases">
        <title>Complete sequence of Chlorobium chlorochromatii CaD3.</title>
        <authorList>
            <consortium name="US DOE Joint Genome Institute"/>
            <person name="Copeland A."/>
            <person name="Lucas S."/>
            <person name="Lapidus A."/>
            <person name="Barry K."/>
            <person name="Detter J.C."/>
            <person name="Glavina T."/>
            <person name="Hammon N."/>
            <person name="Israni S."/>
            <person name="Pitluck S."/>
            <person name="Bryant D."/>
            <person name="Schmutz J."/>
            <person name="Larimer F."/>
            <person name="Land M."/>
            <person name="Kyrpides N."/>
            <person name="Ivanova N."/>
            <person name="Richardson P."/>
        </authorList>
    </citation>
    <scope>NUCLEOTIDE SEQUENCE [LARGE SCALE GENOMIC DNA]</scope>
    <source>
        <strain>CaD3</strain>
    </source>
</reference>
<organism>
    <name type="scientific">Chlorobium chlorochromatii (strain CaD3)</name>
    <dbReference type="NCBI Taxonomy" id="340177"/>
    <lineage>
        <taxon>Bacteria</taxon>
        <taxon>Pseudomonadati</taxon>
        <taxon>Chlorobiota</taxon>
        <taxon>Chlorobiia</taxon>
        <taxon>Chlorobiales</taxon>
        <taxon>Chlorobiaceae</taxon>
        <taxon>Chlorobium/Pelodictyon group</taxon>
        <taxon>Chlorobium</taxon>
    </lineage>
</organism>
<keyword id="KW-0687">Ribonucleoprotein</keyword>
<keyword id="KW-0689">Ribosomal protein</keyword>
<proteinExistence type="inferred from homology"/>
<feature type="chain" id="PRO_0000258658" description="Large ribosomal subunit protein bL35">
    <location>
        <begin position="1"/>
        <end position="64"/>
    </location>
</feature>
<accession>Q3APW1</accession>
<evidence type="ECO:0000255" key="1">
    <source>
        <dbReference type="HAMAP-Rule" id="MF_00514"/>
    </source>
</evidence>
<evidence type="ECO:0000305" key="2"/>